<evidence type="ECO:0000255" key="1">
    <source>
        <dbReference type="HAMAP-Rule" id="MF_00240"/>
    </source>
</evidence>
<feature type="signal peptide" evidence="1">
    <location>
        <begin position="1"/>
        <end position="21"/>
    </location>
</feature>
<feature type="chain" id="PRO_1000058984" description="Outer-membrane lipoprotein carrier protein">
    <location>
        <begin position="22"/>
        <end position="203"/>
    </location>
</feature>
<dbReference type="EMBL" id="CP000800">
    <property type="protein sequence ID" value="ABV20390.1"/>
    <property type="molecule type" value="Genomic_DNA"/>
</dbReference>
<dbReference type="RefSeq" id="WP_001295343.1">
    <property type="nucleotide sequence ID" value="NC_009801.1"/>
</dbReference>
<dbReference type="BMRB" id="A7ZJW0"/>
<dbReference type="SMR" id="A7ZJW0"/>
<dbReference type="GeneID" id="93776529"/>
<dbReference type="KEGG" id="ecw:EcE24377A_0966"/>
<dbReference type="HOGENOM" id="CLU_087560_1_1_6"/>
<dbReference type="Proteomes" id="UP000001122">
    <property type="component" value="Chromosome"/>
</dbReference>
<dbReference type="GO" id="GO:0030288">
    <property type="term" value="C:outer membrane-bounded periplasmic space"/>
    <property type="evidence" value="ECO:0007669"/>
    <property type="project" value="TreeGrafter"/>
</dbReference>
<dbReference type="GO" id="GO:0044874">
    <property type="term" value="P:lipoprotein localization to outer membrane"/>
    <property type="evidence" value="ECO:0007669"/>
    <property type="project" value="UniProtKB-UniRule"/>
</dbReference>
<dbReference type="GO" id="GO:0042953">
    <property type="term" value="P:lipoprotein transport"/>
    <property type="evidence" value="ECO:0007669"/>
    <property type="project" value="InterPro"/>
</dbReference>
<dbReference type="CDD" id="cd16325">
    <property type="entry name" value="LolA"/>
    <property type="match status" value="1"/>
</dbReference>
<dbReference type="FunFam" id="2.50.20.10:FF:000001">
    <property type="entry name" value="Outer-membrane lipoprotein carrier protein"/>
    <property type="match status" value="1"/>
</dbReference>
<dbReference type="Gene3D" id="2.50.20.10">
    <property type="entry name" value="Lipoprotein localisation LolA/LolB/LppX"/>
    <property type="match status" value="1"/>
</dbReference>
<dbReference type="HAMAP" id="MF_00240">
    <property type="entry name" value="LolA"/>
    <property type="match status" value="1"/>
</dbReference>
<dbReference type="InterPro" id="IPR029046">
    <property type="entry name" value="LolA/LolB/LppX"/>
</dbReference>
<dbReference type="InterPro" id="IPR004564">
    <property type="entry name" value="OM_lipoprot_carrier_LolA-like"/>
</dbReference>
<dbReference type="InterPro" id="IPR018323">
    <property type="entry name" value="OM_lipoprot_carrier_LolA_Pbac"/>
</dbReference>
<dbReference type="NCBIfam" id="TIGR00547">
    <property type="entry name" value="lolA"/>
    <property type="match status" value="1"/>
</dbReference>
<dbReference type="PANTHER" id="PTHR35869">
    <property type="entry name" value="OUTER-MEMBRANE LIPOPROTEIN CARRIER PROTEIN"/>
    <property type="match status" value="1"/>
</dbReference>
<dbReference type="PANTHER" id="PTHR35869:SF1">
    <property type="entry name" value="OUTER-MEMBRANE LIPOPROTEIN CARRIER PROTEIN"/>
    <property type="match status" value="1"/>
</dbReference>
<dbReference type="Pfam" id="PF03548">
    <property type="entry name" value="LolA"/>
    <property type="match status" value="1"/>
</dbReference>
<dbReference type="SUPFAM" id="SSF89392">
    <property type="entry name" value="Prokaryotic lipoproteins and lipoprotein localization factors"/>
    <property type="match status" value="1"/>
</dbReference>
<comment type="function">
    <text evidence="1">Participates in the translocation of lipoproteins from the inner membrane to the outer membrane. Only forms a complex with a lipoprotein if the residue after the N-terminal Cys is not an aspartate (The Asp acts as a targeting signal to indicate that the lipoprotein should stay in the inner membrane).</text>
</comment>
<comment type="subunit">
    <text evidence="1">Monomer.</text>
</comment>
<comment type="subcellular location">
    <subcellularLocation>
        <location evidence="1">Periplasm</location>
    </subcellularLocation>
</comment>
<comment type="similarity">
    <text evidence="1">Belongs to the LolA family.</text>
</comment>
<reference key="1">
    <citation type="journal article" date="2008" name="J. Bacteriol.">
        <title>The pangenome structure of Escherichia coli: comparative genomic analysis of E. coli commensal and pathogenic isolates.</title>
        <authorList>
            <person name="Rasko D.A."/>
            <person name="Rosovitz M.J."/>
            <person name="Myers G.S.A."/>
            <person name="Mongodin E.F."/>
            <person name="Fricke W.F."/>
            <person name="Gajer P."/>
            <person name="Crabtree J."/>
            <person name="Sebaihia M."/>
            <person name="Thomson N.R."/>
            <person name="Chaudhuri R."/>
            <person name="Henderson I.R."/>
            <person name="Sperandio V."/>
            <person name="Ravel J."/>
        </authorList>
    </citation>
    <scope>NUCLEOTIDE SEQUENCE [LARGE SCALE GENOMIC DNA]</scope>
    <source>
        <strain>E24377A / ETEC</strain>
    </source>
</reference>
<keyword id="KW-0143">Chaperone</keyword>
<keyword id="KW-0574">Periplasm</keyword>
<keyword id="KW-0653">Protein transport</keyword>
<keyword id="KW-1185">Reference proteome</keyword>
<keyword id="KW-0732">Signal</keyword>
<keyword id="KW-0813">Transport</keyword>
<proteinExistence type="inferred from homology"/>
<protein>
    <recommendedName>
        <fullName evidence="1">Outer-membrane lipoprotein carrier protein</fullName>
    </recommendedName>
</protein>
<organism>
    <name type="scientific">Escherichia coli O139:H28 (strain E24377A / ETEC)</name>
    <dbReference type="NCBI Taxonomy" id="331111"/>
    <lineage>
        <taxon>Bacteria</taxon>
        <taxon>Pseudomonadati</taxon>
        <taxon>Pseudomonadota</taxon>
        <taxon>Gammaproteobacteria</taxon>
        <taxon>Enterobacterales</taxon>
        <taxon>Enterobacteriaceae</taxon>
        <taxon>Escherichia</taxon>
    </lineage>
</organism>
<accession>A7ZJW0</accession>
<gene>
    <name evidence="1" type="primary">lolA</name>
    <name type="ordered locus">EcE24377A_0966</name>
</gene>
<name>LOLA_ECO24</name>
<sequence>MKKIAITCALLSSLVASSVWADAASDLKSRLDKVSSFHASFTQKVTDGSGAAVQEGQGDLWVKRPNLFNWHMTQPDESILVSDGKTLWFYNPFVEQATATWLKDATGNTPFMLIARNQSSDWQQYNIKQNGDDFVLTPKASNGNLKQFTINVGRDGTIHQFSAVEQDDQRSSYQLKSQQNGAVDAAKFTFTPPQGVTVDDQRK</sequence>